<organism>
    <name type="scientific">Escherichia coli (strain K12)</name>
    <dbReference type="NCBI Taxonomy" id="83333"/>
    <lineage>
        <taxon>Bacteria</taxon>
        <taxon>Pseudomonadati</taxon>
        <taxon>Pseudomonadota</taxon>
        <taxon>Gammaproteobacteria</taxon>
        <taxon>Enterobacterales</taxon>
        <taxon>Enterobacteriaceae</taxon>
        <taxon>Escherichia</taxon>
    </lineage>
</organism>
<dbReference type="EMBL" id="X52890">
    <property type="protein sequence ID" value="CAA37071.1"/>
    <property type="molecule type" value="Genomic_DNA"/>
</dbReference>
<dbReference type="EMBL" id="M93570">
    <property type="protein sequence ID" value="AAA23551.1"/>
    <property type="molecule type" value="Genomic_DNA"/>
</dbReference>
<dbReference type="EMBL" id="M93571">
    <property type="protein sequence ID" value="AAA23553.1"/>
    <property type="molecule type" value="Genomic_DNA"/>
</dbReference>
<dbReference type="EMBL" id="M93572">
    <property type="protein sequence ID" value="AAA23554.1"/>
    <property type="molecule type" value="Genomic_DNA"/>
</dbReference>
<dbReference type="EMBL" id="M93573">
    <property type="protein sequence ID" value="AAA23559.1"/>
    <property type="molecule type" value="Genomic_DNA"/>
</dbReference>
<dbReference type="EMBL" id="M93574">
    <property type="protein sequence ID" value="AAA23556.1"/>
    <property type="molecule type" value="Genomic_DNA"/>
</dbReference>
<dbReference type="EMBL" id="M93575">
    <property type="protein sequence ID" value="AAA23552.1"/>
    <property type="molecule type" value="Genomic_DNA"/>
</dbReference>
<dbReference type="EMBL" id="M93576">
    <property type="protein sequence ID" value="AAA23560.1"/>
    <property type="molecule type" value="Genomic_DNA"/>
</dbReference>
<dbReference type="EMBL" id="M93577">
    <property type="protein sequence ID" value="AAA23557.1"/>
    <property type="molecule type" value="Genomic_DNA"/>
</dbReference>
<dbReference type="EMBL" id="M93591">
    <property type="protein sequence ID" value="AAA23561.1"/>
    <property type="molecule type" value="Genomic_DNA"/>
</dbReference>
<dbReference type="EMBL" id="M93592">
    <property type="protein sequence ID" value="AAA23555.1"/>
    <property type="molecule type" value="Genomic_DNA"/>
</dbReference>
<dbReference type="EMBL" id="M93593">
    <property type="protein sequence ID" value="AAA23558.1"/>
    <property type="molecule type" value="Genomic_DNA"/>
</dbReference>
<dbReference type="EMBL" id="U00096">
    <property type="protein sequence ID" value="AAC74806.1"/>
    <property type="molecule type" value="Genomic_DNA"/>
</dbReference>
<dbReference type="EMBL" id="AP009048">
    <property type="protein sequence ID" value="BAA15517.1"/>
    <property type="molecule type" value="Genomic_DNA"/>
</dbReference>
<dbReference type="PIR" id="H64932">
    <property type="entry name" value="H64932"/>
</dbReference>
<dbReference type="RefSeq" id="NP_416250.1">
    <property type="nucleotide sequence ID" value="NC_000913.3"/>
</dbReference>
<dbReference type="RefSeq" id="WP_000968919.1">
    <property type="nucleotide sequence ID" value="NZ_STEB01000009.1"/>
</dbReference>
<dbReference type="PDB" id="1WCR">
    <property type="method" value="NMR"/>
    <property type="chains" value="A/B/C=14-116"/>
</dbReference>
<dbReference type="PDB" id="2LRK">
    <property type="method" value="NMR"/>
    <property type="chains" value="A/B/C=14-116"/>
</dbReference>
<dbReference type="PDB" id="2LRL">
    <property type="method" value="NMR"/>
    <property type="chains" value="A/B/C=14-116"/>
</dbReference>
<dbReference type="PDB" id="2WWV">
    <property type="method" value="NMR"/>
    <property type="chains" value="A/B/C=14-116"/>
</dbReference>
<dbReference type="PDB" id="2WY2">
    <property type="method" value="NMR"/>
    <property type="chains" value="A/B/C=14-116"/>
</dbReference>
<dbReference type="PDBsum" id="1WCR"/>
<dbReference type="PDBsum" id="2LRK"/>
<dbReference type="PDBsum" id="2LRL"/>
<dbReference type="PDBsum" id="2WWV"/>
<dbReference type="PDBsum" id="2WY2"/>
<dbReference type="BMRB" id="P69791"/>
<dbReference type="SMR" id="P69791"/>
<dbReference type="BioGRID" id="4259134">
    <property type="interactions" value="25"/>
</dbReference>
<dbReference type="ComplexPortal" id="CPX-4683">
    <property type="entry name" value="N,N'-diacetylchitobiose-specific enzyme II complex"/>
</dbReference>
<dbReference type="DIP" id="DIP-9265N"/>
<dbReference type="FunCoup" id="P69791">
    <property type="interactions" value="123"/>
</dbReference>
<dbReference type="IntAct" id="P69791">
    <property type="interactions" value="12"/>
</dbReference>
<dbReference type="STRING" id="511145.b1736"/>
<dbReference type="TCDB" id="4.A.3.2.1">
    <property type="family name" value="the pts lactose-n,n'-diacetylchitobiose-Beta-glucoside (lac) family"/>
</dbReference>
<dbReference type="iPTMnet" id="P69791"/>
<dbReference type="PaxDb" id="511145-b1736"/>
<dbReference type="EnsemblBacteria" id="AAC74806">
    <property type="protein sequence ID" value="AAC74806"/>
    <property type="gene ID" value="b1736"/>
</dbReference>
<dbReference type="GeneID" id="93775949"/>
<dbReference type="GeneID" id="946244"/>
<dbReference type="KEGG" id="ecj:JW1725"/>
<dbReference type="KEGG" id="eco:b1736"/>
<dbReference type="KEGG" id="ecoc:C3026_09920"/>
<dbReference type="PATRIC" id="fig|1411691.4.peg.520"/>
<dbReference type="EchoBASE" id="EB0140"/>
<dbReference type="eggNOG" id="COG1447">
    <property type="taxonomic scope" value="Bacteria"/>
</dbReference>
<dbReference type="HOGENOM" id="CLU_152490_3_0_6"/>
<dbReference type="InParanoid" id="P69791"/>
<dbReference type="OMA" id="MEQSRMA"/>
<dbReference type="OrthoDB" id="350602at2"/>
<dbReference type="PhylomeDB" id="P69791"/>
<dbReference type="BioCyc" id="EcoCyc:CELC-MONOMER"/>
<dbReference type="BioCyc" id="MetaCyc:CELC-MONOMER"/>
<dbReference type="EvolutionaryTrace" id="P69791"/>
<dbReference type="PRO" id="PR:P69791"/>
<dbReference type="Proteomes" id="UP000000625">
    <property type="component" value="Chromosome"/>
</dbReference>
<dbReference type="GO" id="GO:0005829">
    <property type="term" value="C:cytosol"/>
    <property type="evidence" value="ECO:0000314"/>
    <property type="project" value="EcoCyc"/>
</dbReference>
<dbReference type="GO" id="GO:0032991">
    <property type="term" value="C:protein-containing complex"/>
    <property type="evidence" value="ECO:0000314"/>
    <property type="project" value="EcoCyc"/>
</dbReference>
<dbReference type="GO" id="GO:1902495">
    <property type="term" value="C:transmembrane transporter complex"/>
    <property type="evidence" value="ECO:0000303"/>
    <property type="project" value="ComplexPortal"/>
</dbReference>
<dbReference type="GO" id="GO:0090566">
    <property type="term" value="F:protein-phosphocysteine-N,N'-diacetylchitobiose phosphotransferase system transporter activity"/>
    <property type="evidence" value="ECO:0000314"/>
    <property type="project" value="EcoCyc"/>
</dbReference>
<dbReference type="GO" id="GO:1902815">
    <property type="term" value="P:N,N'-diacetylchitobiose import"/>
    <property type="evidence" value="ECO:0000314"/>
    <property type="project" value="EcoCyc"/>
</dbReference>
<dbReference type="GO" id="GO:0009401">
    <property type="term" value="P:phosphoenolpyruvate-dependent sugar phosphotransferase system"/>
    <property type="evidence" value="ECO:0000314"/>
    <property type="project" value="EcoCyc"/>
</dbReference>
<dbReference type="CDD" id="cd00215">
    <property type="entry name" value="PTS_IIA_lac"/>
    <property type="match status" value="1"/>
</dbReference>
<dbReference type="FunFam" id="1.20.58.80:FF:000001">
    <property type="entry name" value="PTS system, lactose-specific IIa component"/>
    <property type="match status" value="1"/>
</dbReference>
<dbReference type="Gene3D" id="1.20.58.80">
    <property type="entry name" value="Phosphotransferase system, lactose/cellobiose-type IIA subunit"/>
    <property type="match status" value="1"/>
</dbReference>
<dbReference type="InterPro" id="IPR003188">
    <property type="entry name" value="PTS_IIA_lac/cel"/>
</dbReference>
<dbReference type="InterPro" id="IPR036542">
    <property type="entry name" value="PTS_IIA_lac/cel_sf"/>
</dbReference>
<dbReference type="NCBIfam" id="TIGR00823">
    <property type="entry name" value="EIIA-LAC"/>
    <property type="match status" value="1"/>
</dbReference>
<dbReference type="NCBIfam" id="NF007768">
    <property type="entry name" value="PRK10454.1"/>
    <property type="match status" value="1"/>
</dbReference>
<dbReference type="PANTHER" id="PTHR34382">
    <property type="entry name" value="PTS SYSTEM N,N'-DIACETYLCHITOBIOSE-SPECIFIC EIIA COMPONENT"/>
    <property type="match status" value="1"/>
</dbReference>
<dbReference type="PANTHER" id="PTHR34382:SF7">
    <property type="entry name" value="PTS SYSTEM N,N'-DIACETYLCHITOBIOSE-SPECIFIC EIIA COMPONENT"/>
    <property type="match status" value="1"/>
</dbReference>
<dbReference type="Pfam" id="PF02255">
    <property type="entry name" value="PTS_IIA"/>
    <property type="match status" value="1"/>
</dbReference>
<dbReference type="PIRSF" id="PIRSF000699">
    <property type="entry name" value="PTS_IILac_III"/>
    <property type="match status" value="1"/>
</dbReference>
<dbReference type="SUPFAM" id="SSF46973">
    <property type="entry name" value="Enzyme IIa from lactose specific PTS, IIa-lac"/>
    <property type="match status" value="1"/>
</dbReference>
<dbReference type="PROSITE" id="PS51095">
    <property type="entry name" value="PTS_EIIA_TYPE_3"/>
    <property type="match status" value="1"/>
</dbReference>
<name>PTQA_ECOLI</name>
<reference key="1">
    <citation type="journal article" date="1990" name="Genetics">
        <title>Characterization and nucleotide sequence of the cryptic cel operon of Escherichia coli K12.</title>
        <authorList>
            <person name="Parker L.L."/>
            <person name="Hall B.G."/>
        </authorList>
    </citation>
    <scope>NUCLEOTIDE SEQUENCE [GENOMIC DNA]</scope>
    <scope>GENE NAME</scope>
    <source>
        <strain>K12</strain>
    </source>
</reference>
<reference key="2">
    <citation type="journal article" date="1992" name="Mol. Biol. Evol.">
        <title>Molecular population genetics of Escherichia coli: DNA sequence diversity at the celC, crr, and gutB loci of natural isolates.</title>
        <authorList>
            <person name="Hall B.G."/>
            <person name="Sharp P.M."/>
        </authorList>
    </citation>
    <scope>NUCLEOTIDE SEQUENCE [GENOMIC DNA]</scope>
    <source>
        <strain>28</strain>
        <strain>35</strain>
        <strain>37</strain>
        <strain>50</strain>
        <strain>51</strain>
        <strain>58</strain>
        <strain>6</strain>
        <strain>61</strain>
        <strain>66</strain>
        <strain>69</strain>
        <strain>ECOR 1</strain>
    </source>
</reference>
<reference key="3">
    <citation type="journal article" date="1996" name="DNA Res.">
        <title>A 570-kb DNA sequence of the Escherichia coli K-12 genome corresponding to the 28.0-40.1 min region on the linkage map.</title>
        <authorList>
            <person name="Aiba H."/>
            <person name="Baba T."/>
            <person name="Fujita K."/>
            <person name="Hayashi K."/>
            <person name="Inada T."/>
            <person name="Isono K."/>
            <person name="Itoh T."/>
            <person name="Kasai H."/>
            <person name="Kashimoto K."/>
            <person name="Kimura S."/>
            <person name="Kitakawa M."/>
            <person name="Kitagawa M."/>
            <person name="Makino K."/>
            <person name="Miki T."/>
            <person name="Mizobuchi K."/>
            <person name="Mori H."/>
            <person name="Mori T."/>
            <person name="Motomura K."/>
            <person name="Nakade S."/>
            <person name="Nakamura Y."/>
            <person name="Nashimoto H."/>
            <person name="Nishio Y."/>
            <person name="Oshima T."/>
            <person name="Saito N."/>
            <person name="Sampei G."/>
            <person name="Seki Y."/>
            <person name="Sivasundaram S."/>
            <person name="Tagami H."/>
            <person name="Takeda J."/>
            <person name="Takemoto K."/>
            <person name="Takeuchi Y."/>
            <person name="Wada C."/>
            <person name="Yamamoto Y."/>
            <person name="Horiuchi T."/>
        </authorList>
    </citation>
    <scope>NUCLEOTIDE SEQUENCE [LARGE SCALE GENOMIC DNA]</scope>
    <source>
        <strain>K12 / W3110 / ATCC 27325 / DSM 5911</strain>
    </source>
</reference>
<reference key="4">
    <citation type="journal article" date="1997" name="Science">
        <title>The complete genome sequence of Escherichia coli K-12.</title>
        <authorList>
            <person name="Blattner F.R."/>
            <person name="Plunkett G. III"/>
            <person name="Bloch C.A."/>
            <person name="Perna N.T."/>
            <person name="Burland V."/>
            <person name="Riley M."/>
            <person name="Collado-Vides J."/>
            <person name="Glasner J.D."/>
            <person name="Rode C.K."/>
            <person name="Mayhew G.F."/>
            <person name="Gregor J."/>
            <person name="Davis N.W."/>
            <person name="Kirkpatrick H.A."/>
            <person name="Goeden M.A."/>
            <person name="Rose D.J."/>
            <person name="Mau B."/>
            <person name="Shao Y."/>
        </authorList>
    </citation>
    <scope>NUCLEOTIDE SEQUENCE [LARGE SCALE GENOMIC DNA]</scope>
    <source>
        <strain>K12 / MG1655 / ATCC 47076</strain>
    </source>
</reference>
<reference key="5">
    <citation type="journal article" date="2006" name="Mol. Syst. Biol.">
        <title>Highly accurate genome sequences of Escherichia coli K-12 strains MG1655 and W3110.</title>
        <authorList>
            <person name="Hayashi K."/>
            <person name="Morooka N."/>
            <person name="Yamamoto Y."/>
            <person name="Fujita K."/>
            <person name="Isono K."/>
            <person name="Choi S."/>
            <person name="Ohtsubo E."/>
            <person name="Baba T."/>
            <person name="Wanner B.L."/>
            <person name="Mori H."/>
            <person name="Horiuchi T."/>
        </authorList>
    </citation>
    <scope>NUCLEOTIDE SEQUENCE [LARGE SCALE GENOMIC DNA]</scope>
    <source>
        <strain>K12 / W3110 / ATCC 27325 / DSM 5911</strain>
    </source>
</reference>
<reference key="6">
    <citation type="journal article" date="1990" name="Res. Microbiol.">
        <title>The cellobiose permease of Escherichia coli consists of three proteins and is homologous to the lactose permease of Staphylococcus aureus.</title>
        <authorList>
            <person name="Reizer J."/>
            <person name="Reizer A."/>
            <person name="Saier M.H. Jr."/>
        </authorList>
    </citation>
    <scope>FUNCTION</scope>
    <scope>ACTIVE SITE</scope>
</reference>
<reference key="7">
    <citation type="journal article" date="1997" name="Proc. Natl. Acad. Sci. U.S.A.">
        <title>Wild-type Escherichia coli grows on the chitin disaccharide, N,N'-diacetylchitobiose, by expressing the cel operon.</title>
        <authorList>
            <person name="Keyhani N.O."/>
            <person name="Roseman S."/>
        </authorList>
    </citation>
    <scope>IDENTIFICATION OF CHB OPERON</scope>
</reference>
<reference key="8">
    <citation type="journal article" date="2000" name="J. Biol. Chem.">
        <title>The chitin disaccharide, N,N'-diacetylchitobiose, is catabolized by Escherichia coli and is transported/phosphorylated by the phosphoenolpyruvate:glycose phosphotransferase system.</title>
        <authorList>
            <person name="Keyhani N.O."/>
            <person name="Wang L.-X."/>
            <person name="Lee Y.C."/>
            <person name="Roseman S."/>
        </authorList>
    </citation>
    <scope>FUNCTION</scope>
    <scope>CATALYTIC ACTIVITY</scope>
    <scope>INDUCTION</scope>
    <scope>SUBSTRATE SPECIFICITY</scope>
</reference>
<reference key="9">
    <citation type="journal article" date="2000" name="J. Biol. Chem.">
        <title>Isolation and characterization of IIAChb, a soluble protein of the enzyme II complex required for the transport/phosphorylation of N, N'-diacetylchitobiose in Escherichia coli.</title>
        <authorList>
            <person name="Keyhani N.O."/>
            <person name="Boudker O."/>
            <person name="Roseman S."/>
        </authorList>
    </citation>
    <scope>FUNCTION</scope>
    <scope>CATALYTIC ACTIVITY</scope>
    <scope>COFACTOR</scope>
    <scope>SUBUNIT</scope>
    <scope>PHOSPHORYLATION AT HIS-89</scope>
</reference>
<reference key="10">
    <citation type="journal article" date="2000" name="J. Biol. Chem.">
        <title>The transport/phosphorylation of N,N'-diacetylchitobiose in Escherichia coli. Characterization of phospho-IIB(Chb) and of a potential transition state analogue in the phosphotransfer reaction between the proteins IIA(Chb) and IIB(Chb).</title>
        <authorList>
            <person name="Keyhani N.O."/>
            <person name="Bacia K."/>
            <person name="Roseman S."/>
        </authorList>
    </citation>
    <scope>SUBUNIT</scope>
</reference>
<reference key="11">
    <citation type="journal article" date="2000" name="J. Biol. Chem.">
        <title>Analytical sedimentation of the IIAChb and IIBChb proteins of the Escherichia coli N,N'-diacetylchitobiose phosphotransferase system. Demonstration of a model phosphotransfer transition state complex.</title>
        <authorList>
            <person name="Keyhani N.O."/>
            <person name="Rodgers M.E."/>
            <person name="Demeler B."/>
            <person name="Hansen J.C."/>
            <person name="Roseman S."/>
        </authorList>
    </citation>
    <scope>SUBUNIT</scope>
</reference>
<reference key="12">
    <citation type="journal article" date="2005" name="J. Biol. Chem.">
        <title>Solution structure of enzyme IIA(Chitobiose) from the N,N'-diacetylchitobiose branch of the Escherichia coli phosphotransferase system.</title>
        <authorList>
            <person name="Tang C."/>
            <person name="Williams D.C. Jr."/>
            <person name="Ghirlando R."/>
            <person name="Clore G.M."/>
        </authorList>
    </citation>
    <scope>STRUCTURE BY NMR OF 14-116 OF MUTANT LEU-92</scope>
    <scope>MUTAGENESIS OF ASP-92</scope>
    <scope>COFACTOR</scope>
    <scope>ACTIVE SITE</scope>
    <scope>SUBUNIT</scope>
    <scope>PHOSPHORYLATION AT HIS-89</scope>
</reference>
<reference key="13">
    <citation type="journal article" date="2010" name="J. Biol. Chem.">
        <title>Solution structure of the IIAChitobiose-IIBChitobiose complex of the N,N'-diacetylchitobiose branch of the Escherichia coli phosphotransferase system.</title>
        <authorList>
            <person name="Jung Y.S."/>
            <person name="Cai M."/>
            <person name="Clore G.M."/>
        </authorList>
    </citation>
    <scope>STRUCTURE BY NMR OF 14-116 OF MUTANT GLU-89</scope>
    <scope>ACTIVE SITE</scope>
    <scope>SUBUNIT</scope>
</reference>
<reference key="14">
    <citation type="journal article" date="2012" name="J. Biol. Chem.">
        <title>Solution structure of the IIAChitobiose-HPr complex of the N,N'-diacetylchitobiose branch of the Escherichia coli phosphotransferase system.</title>
        <authorList>
            <person name="Jung Y.S."/>
            <person name="Cai M."/>
            <person name="Clore G.M."/>
        </authorList>
    </citation>
    <scope>STRUCTURE BY NMR OF 14-116 OF MUTANT GLU-89 IN COMPLEX WITH THE HISTIDINE PHOSPHOCARRIER PROTEIN HPR</scope>
    <scope>ACTIVE SITE</scope>
    <scope>SUBUNIT</scope>
    <scope>PHOSPHORYLATION AT HIS-89</scope>
</reference>
<sequence length="116" mass="12748">MMDLDNIPDTQTEAEELEEVVMGLIINSGQARSLAYAALKQAKQGDFAAAKAMMDQSRMALNEAHLVQTKLIEGDAGEGKMKVSLVLVHAQDHLMTSMLARELITELIELHEKLKA</sequence>
<accession>P69791</accession>
<accession>P17335</accession>
<accession>Q47092</accession>
<accession>Q47093</accession>
<accession>Q47094</accession>
<accession>Q57128</accession>
<comment type="function">
    <text evidence="2 3 16">The phosphoenolpyruvate-dependent sugar phosphotransferase system (sugar PTS), a major carbohydrate active transport system, catalyzes the phosphorylation of incoming sugar substrates concomitantly with their translocation across the cell membrane. The enzyme II ChbABC PTS system is involved in the transport of the chitin disaccharide N,N'-diacetylchitobiose (GlcNAc2) (PubMed:10913117, PubMed:10913118). Also able to use N,N',N''-triacetyl chitotriose (GlcNAc3) (PubMed:10913117).</text>
</comment>
<comment type="cofactor">
    <cofactor evidence="3 14">
        <name>Mg(2+)</name>
        <dbReference type="ChEBI" id="CHEBI:18420"/>
    </cofactor>
    <text evidence="3">Can also use copper and nickel with lower efficiency.</text>
</comment>
<comment type="subunit">
    <text evidence="4 5 6 7 8 13">Forms a complex with ChbB (EIIB) (PubMed:10913119, PubMed:10913122, PubMed:19959833). ChbA is a homotrimer (PubMed:10913122, PubMed:15654077, PubMed:19959833, PubMed:22593574). The interface of the homotrimer is stabilized by metal cations such as magnesium, copper or nickel (PubMed:15654077).</text>
</comment>
<comment type="interaction">
    <interactant intactId="EBI-1121924">
        <id>P69791</id>
    </interactant>
    <interactant intactId="EBI-1128186">
        <id>P69795</id>
        <label>chbB</label>
    </interactant>
    <organismsDiffer>false</organismsDiffer>
    <experiments>2</experiments>
</comment>
<comment type="subcellular location">
    <subcellularLocation>
        <location evidence="12">Cytoplasm</location>
    </subcellularLocation>
</comment>
<comment type="induction">
    <text evidence="2">By GlcNAc2, GlcNAc3 and beta-N,N'-diacetylchitobiose (Me-TCB).</text>
</comment>
<comment type="domain">
    <text evidence="1">The PTS EIIA type-3 domain is phosphorylated by phospho-HPr on a histidyl residue. Then, it transfers the phosphoryl group to the PTS EIIB type-3 domain.</text>
</comment>
<comment type="caution">
    <text evidence="17">Was originally (PubMed:2179047) characterized as part of a cryptic cel operon for a cellobiose degradation system. The Cel+ phenotype is due to mutations making expression chitobiose-independent and altering the substrate specificity.</text>
</comment>
<keyword id="KW-0002">3D-structure</keyword>
<keyword id="KW-0963">Cytoplasm</keyword>
<keyword id="KW-0597">Phosphoprotein</keyword>
<keyword id="KW-0598">Phosphotransferase system</keyword>
<keyword id="KW-1185">Reference proteome</keyword>
<keyword id="KW-0762">Sugar transport</keyword>
<keyword id="KW-0808">Transferase</keyword>
<keyword id="KW-0813">Transport</keyword>
<feature type="chain" id="PRO_0000186494" description="PTS system N,N'-diacetylchitobiose-specific EIIA component">
    <location>
        <begin position="1"/>
        <end position="116"/>
    </location>
</feature>
<feature type="domain" description="PTS EIIA type-3" evidence="1">
    <location>
        <begin position="15"/>
        <end position="113"/>
    </location>
</feature>
<feature type="active site" description="Tele-phosphohistidine intermediate" evidence="14 15 16 18">
    <location>
        <position position="89"/>
    </location>
</feature>
<feature type="modified residue" description="Phosphohistidine; by HPr" evidence="1 13 14 18">
    <location>
        <position position="89"/>
    </location>
</feature>
<feature type="sequence variant" description="In strain: ECOR 1.">
    <original>A</original>
    <variation>V</variation>
    <location>
        <position position="14"/>
    </location>
</feature>
<feature type="sequence variant" description="In strain: ECOR 61.">
    <original>A</original>
    <variation>T</variation>
    <location>
        <position position="52"/>
    </location>
</feature>
<feature type="sequence variant" description="In strain: ECOR 50.">
    <original>M</original>
    <variation>I</variation>
    <location>
        <position position="59"/>
    </location>
</feature>
<feature type="mutagenesis site" description="Eliminates the need for a metal cation at the homotrimer interface by substituting hydrophobic methyl-methyl interactions in place of the metal cation." evidence="6">
    <original>D</original>
    <variation>L</variation>
    <location>
        <position position="92"/>
    </location>
</feature>
<feature type="sequence conflict" description="In Ref. 1; CAA37071." evidence="12" ref="1">
    <original>KQ</original>
    <variation>NR</variation>
    <location>
        <begin position="43"/>
        <end position="44"/>
    </location>
</feature>
<feature type="helix" evidence="19">
    <location>
        <begin position="15"/>
        <end position="43"/>
    </location>
</feature>
<feature type="helix" evidence="19">
    <location>
        <begin position="47"/>
        <end position="74"/>
    </location>
</feature>
<feature type="strand" evidence="19">
    <location>
        <begin position="77"/>
        <end position="79"/>
    </location>
</feature>
<feature type="helix" evidence="19">
    <location>
        <begin position="85"/>
        <end position="114"/>
    </location>
</feature>
<evidence type="ECO:0000255" key="1">
    <source>
        <dbReference type="PROSITE-ProRule" id="PRU00418"/>
    </source>
</evidence>
<evidence type="ECO:0000269" key="2">
    <source>
    </source>
</evidence>
<evidence type="ECO:0000269" key="3">
    <source>
    </source>
</evidence>
<evidence type="ECO:0000269" key="4">
    <source>
    </source>
</evidence>
<evidence type="ECO:0000269" key="5">
    <source>
    </source>
</evidence>
<evidence type="ECO:0000269" key="6">
    <source>
    </source>
</evidence>
<evidence type="ECO:0000269" key="7">
    <source>
    </source>
</evidence>
<evidence type="ECO:0000269" key="8">
    <source>
    </source>
</evidence>
<evidence type="ECO:0000303" key="9">
    <source>
    </source>
</evidence>
<evidence type="ECO:0000303" key="10">
    <source>
    </source>
</evidence>
<evidence type="ECO:0000303" key="11">
    <source>
    </source>
</evidence>
<evidence type="ECO:0000305" key="12"/>
<evidence type="ECO:0000305" key="13">
    <source>
    </source>
</evidence>
<evidence type="ECO:0000305" key="14">
    <source>
    </source>
</evidence>
<evidence type="ECO:0000305" key="15">
    <source>
    </source>
</evidence>
<evidence type="ECO:0000305" key="16">
    <source>
    </source>
</evidence>
<evidence type="ECO:0000305" key="17">
    <source>
    </source>
</evidence>
<evidence type="ECO:0000305" key="18">
    <source>
    </source>
</evidence>
<evidence type="ECO:0007829" key="19">
    <source>
        <dbReference type="PDB" id="1WCR"/>
    </source>
</evidence>
<protein>
    <recommendedName>
        <fullName evidence="9">PTS system N,N'-diacetylchitobiose-specific EIIA component</fullName>
    </recommendedName>
    <alternativeName>
        <fullName evidence="9">EIIA-Chb</fullName>
    </alternativeName>
    <alternativeName>
        <fullName evidence="10">EIII-Chb</fullName>
    </alternativeName>
    <alternativeName>
        <fullName evidence="10">IIIcel</fullName>
    </alternativeName>
    <alternativeName>
        <fullName evidence="9">N,N'-diacetylchitobiose-specific phosphotransferase enzyme IIA component</fullName>
    </alternativeName>
</protein>
<gene>
    <name evidence="11" type="primary">chbA</name>
    <name evidence="10" type="synonym">celC</name>
    <name type="ordered locus">b1736</name>
    <name type="ordered locus">JW1725</name>
</gene>
<proteinExistence type="evidence at protein level"/>